<comment type="subcellular location">
    <subcellularLocation>
        <location>Secreted</location>
    </subcellularLocation>
</comment>
<comment type="tissue specificity">
    <text>Expressed by the dorsal and submental skin glands.</text>
</comment>
<dbReference type="GO" id="GO:0005576">
    <property type="term" value="C:extracellular region"/>
    <property type="evidence" value="ECO:0007669"/>
    <property type="project" value="UniProtKB-SubCell"/>
</dbReference>
<dbReference type="GO" id="GO:0006952">
    <property type="term" value="P:defense response"/>
    <property type="evidence" value="ECO:0007669"/>
    <property type="project" value="UniProtKB-KW"/>
</dbReference>
<dbReference type="InterPro" id="IPR013157">
    <property type="entry name" value="Aurein_antimicrobial_peptide"/>
</dbReference>
<dbReference type="Pfam" id="PF08256">
    <property type="entry name" value="Antimicrobial20"/>
    <property type="match status" value="1"/>
</dbReference>
<protein>
    <recommendedName>
        <fullName>Citropin-1.1.3</fullName>
    </recommendedName>
</protein>
<accession>P81838</accession>
<organism>
    <name type="scientific">Ranoidea citropa</name>
    <name type="common">Australian Blue Mountains tree frog</name>
    <name type="synonym">Litoria citropa</name>
    <dbReference type="NCBI Taxonomy" id="94770"/>
    <lineage>
        <taxon>Eukaryota</taxon>
        <taxon>Metazoa</taxon>
        <taxon>Chordata</taxon>
        <taxon>Craniata</taxon>
        <taxon>Vertebrata</taxon>
        <taxon>Euteleostomi</taxon>
        <taxon>Amphibia</taxon>
        <taxon>Batrachia</taxon>
        <taxon>Anura</taxon>
        <taxon>Neobatrachia</taxon>
        <taxon>Hyloidea</taxon>
        <taxon>Hylidae</taxon>
        <taxon>Pelodryadinae</taxon>
        <taxon>Ranoidea</taxon>
    </lineage>
</organism>
<sequence length="18" mass="1814">GLFDVIKKVASVIGLASP</sequence>
<name>CT113_RANCI</name>
<keyword id="KW-0878">Amphibian defense peptide</keyword>
<keyword id="KW-0903">Direct protein sequencing</keyword>
<keyword id="KW-0964">Secreted</keyword>
<proteinExistence type="evidence at protein level"/>
<reference key="1">
    <citation type="journal article" date="1999" name="Eur. J. Biochem.">
        <title>Host defence peptides from the skin glands of the Australian blue mountains tree-frog Litoria citropa. Solution structure of the antibacterial peptide citropin 1.1.</title>
        <authorList>
            <person name="Wegener K.L."/>
            <person name="Wabnitz P.A."/>
            <person name="Carver J.A."/>
            <person name="Bowie J.H."/>
            <person name="Chia B.C.S."/>
            <person name="Wallace J.C."/>
            <person name="Tyler M.J."/>
        </authorList>
    </citation>
    <scope>PROTEIN SEQUENCE</scope>
    <source>
        <tissue>Skin secretion</tissue>
    </source>
</reference>
<feature type="peptide" id="PRO_0000043768" description="Citropin-1.1.3">
    <location>
        <begin position="1"/>
        <end position="18"/>
    </location>
</feature>